<dbReference type="EMBL" id="AJ879453">
    <property type="protein sequence ID" value="CAI53815.1"/>
    <property type="molecule type" value="Genomic_DNA"/>
</dbReference>
<dbReference type="RefSeq" id="YP_319786.1">
    <property type="nucleotide sequence ID" value="NC_007407.1"/>
</dbReference>
<dbReference type="SMR" id="Q3V513"/>
<dbReference type="GeneID" id="3677457"/>
<dbReference type="GO" id="GO:0009507">
    <property type="term" value="C:chloroplast"/>
    <property type="evidence" value="ECO:0007669"/>
    <property type="project" value="UniProtKB-SubCell"/>
</dbReference>
<dbReference type="GO" id="GO:0005763">
    <property type="term" value="C:mitochondrial small ribosomal subunit"/>
    <property type="evidence" value="ECO:0007669"/>
    <property type="project" value="TreeGrafter"/>
</dbReference>
<dbReference type="GO" id="GO:0070181">
    <property type="term" value="F:small ribosomal subunit rRNA binding"/>
    <property type="evidence" value="ECO:0007669"/>
    <property type="project" value="TreeGrafter"/>
</dbReference>
<dbReference type="GO" id="GO:0003735">
    <property type="term" value="F:structural constituent of ribosome"/>
    <property type="evidence" value="ECO:0007669"/>
    <property type="project" value="InterPro"/>
</dbReference>
<dbReference type="GO" id="GO:0006412">
    <property type="term" value="P:translation"/>
    <property type="evidence" value="ECO:0007669"/>
    <property type="project" value="UniProtKB-UniRule"/>
</dbReference>
<dbReference type="FunFam" id="4.10.640.10:FF:000002">
    <property type="entry name" value="30S ribosomal protein S18, chloroplastic"/>
    <property type="match status" value="1"/>
</dbReference>
<dbReference type="Gene3D" id="4.10.640.10">
    <property type="entry name" value="Ribosomal protein S18"/>
    <property type="match status" value="1"/>
</dbReference>
<dbReference type="HAMAP" id="MF_00270">
    <property type="entry name" value="Ribosomal_bS18"/>
    <property type="match status" value="1"/>
</dbReference>
<dbReference type="InterPro" id="IPR001648">
    <property type="entry name" value="Ribosomal_bS18"/>
</dbReference>
<dbReference type="InterPro" id="IPR018275">
    <property type="entry name" value="Ribosomal_bS18_CS"/>
</dbReference>
<dbReference type="InterPro" id="IPR036870">
    <property type="entry name" value="Ribosomal_bS18_sf"/>
</dbReference>
<dbReference type="NCBIfam" id="TIGR00165">
    <property type="entry name" value="S18"/>
    <property type="match status" value="1"/>
</dbReference>
<dbReference type="PANTHER" id="PTHR13479">
    <property type="entry name" value="30S RIBOSOMAL PROTEIN S18"/>
    <property type="match status" value="1"/>
</dbReference>
<dbReference type="PANTHER" id="PTHR13479:SF40">
    <property type="entry name" value="SMALL RIBOSOMAL SUBUNIT PROTEIN BS18M"/>
    <property type="match status" value="1"/>
</dbReference>
<dbReference type="Pfam" id="PF01084">
    <property type="entry name" value="Ribosomal_S18"/>
    <property type="match status" value="1"/>
</dbReference>
<dbReference type="PRINTS" id="PR00974">
    <property type="entry name" value="RIBOSOMALS18"/>
</dbReference>
<dbReference type="SUPFAM" id="SSF46911">
    <property type="entry name" value="Ribosomal protein S18"/>
    <property type="match status" value="1"/>
</dbReference>
<dbReference type="PROSITE" id="PS00057">
    <property type="entry name" value="RIBOSOMAL_S18"/>
    <property type="match status" value="1"/>
</dbReference>
<sequence length="101" mass="11954">MDKSKQLFRKSKRSFRRRLPPIGSGDRIDYRNMSLISRFISEQGKILSRRVNRLTLKQQRLITIAIKQARILSSLPFLNNEKQFERTESIPRPTGPRSRNK</sequence>
<keyword id="KW-0150">Chloroplast</keyword>
<keyword id="KW-0934">Plastid</keyword>
<keyword id="KW-0687">Ribonucleoprotein</keyword>
<keyword id="KW-0689">Ribosomal protein</keyword>
<keyword id="KW-0694">RNA-binding</keyword>
<keyword id="KW-0699">rRNA-binding</keyword>
<proteinExistence type="inferred from homology"/>
<reference key="1">
    <citation type="journal article" date="2005" name="Mol. Biol. Evol.">
        <title>Analysis of Acorus calamus chloroplast genome and its phylogenetic implications.</title>
        <authorList>
            <person name="Goremykin V.V."/>
            <person name="Holland B."/>
            <person name="Hirsch-Ernst K.I."/>
            <person name="Hellwig F.H."/>
        </authorList>
    </citation>
    <scope>NUCLEOTIDE SEQUENCE [LARGE SCALE GENOMIC DNA]</scope>
</reference>
<evidence type="ECO:0000255" key="1">
    <source>
        <dbReference type="HAMAP-Rule" id="MF_00270"/>
    </source>
</evidence>
<evidence type="ECO:0000256" key="2">
    <source>
        <dbReference type="SAM" id="MobiDB-lite"/>
    </source>
</evidence>
<evidence type="ECO:0000305" key="3"/>
<feature type="chain" id="PRO_0000345563" description="Small ribosomal subunit protein bS18c">
    <location>
        <begin position="1"/>
        <end position="101"/>
    </location>
</feature>
<feature type="region of interest" description="Disordered" evidence="2">
    <location>
        <begin position="1"/>
        <end position="23"/>
    </location>
</feature>
<feature type="compositionally biased region" description="Basic residues" evidence="2">
    <location>
        <begin position="1"/>
        <end position="19"/>
    </location>
</feature>
<comment type="subunit">
    <text evidence="1">Part of the 30S ribosomal subunit.</text>
</comment>
<comment type="subcellular location">
    <subcellularLocation>
        <location>Plastid</location>
        <location>Chloroplast</location>
    </subcellularLocation>
</comment>
<comment type="similarity">
    <text evidence="1">Belongs to the bacterial ribosomal protein bS18 family.</text>
</comment>
<geneLocation type="chloroplast"/>
<accession>Q3V513</accession>
<protein>
    <recommendedName>
        <fullName evidence="3">Small ribosomal subunit protein bS18c</fullName>
    </recommendedName>
    <alternativeName>
        <fullName>Chloroplast 30S ribosomal protein S18</fullName>
    </alternativeName>
</protein>
<organism>
    <name type="scientific">Acorus calamus</name>
    <name type="common">Sweet flag</name>
    <dbReference type="NCBI Taxonomy" id="4465"/>
    <lineage>
        <taxon>Eukaryota</taxon>
        <taxon>Viridiplantae</taxon>
        <taxon>Streptophyta</taxon>
        <taxon>Embryophyta</taxon>
        <taxon>Tracheophyta</taxon>
        <taxon>Spermatophyta</taxon>
        <taxon>Magnoliopsida</taxon>
        <taxon>Liliopsida</taxon>
        <taxon>Acoraceae</taxon>
        <taxon>Acorus</taxon>
    </lineage>
</organism>
<name>RR18_ACOCL</name>
<gene>
    <name evidence="1" type="primary">rps18</name>
</gene>